<feature type="chain" id="PRO_0000151245" description="Undecaprenyl-diphosphatase">
    <location>
        <begin position="1"/>
        <end position="261"/>
    </location>
</feature>
<feature type="transmembrane region" description="Helical" evidence="1">
    <location>
        <begin position="38"/>
        <end position="58"/>
    </location>
</feature>
<feature type="transmembrane region" description="Helical" evidence="1">
    <location>
        <begin position="75"/>
        <end position="95"/>
    </location>
</feature>
<feature type="transmembrane region" description="Helical" evidence="1">
    <location>
        <begin position="106"/>
        <end position="126"/>
    </location>
</feature>
<feature type="transmembrane region" description="Helical" evidence="1">
    <location>
        <begin position="136"/>
        <end position="156"/>
    </location>
</feature>
<feature type="transmembrane region" description="Helical" evidence="1">
    <location>
        <begin position="181"/>
        <end position="201"/>
    </location>
</feature>
<feature type="transmembrane region" description="Helical" evidence="1">
    <location>
        <begin position="217"/>
        <end position="237"/>
    </location>
</feature>
<feature type="transmembrane region" description="Helical" evidence="1">
    <location>
        <begin position="241"/>
        <end position="261"/>
    </location>
</feature>
<dbReference type="EC" id="3.6.1.27" evidence="1"/>
<dbReference type="EMBL" id="AE009442">
    <property type="protein sequence ID" value="AAO28887.1"/>
    <property type="molecule type" value="Genomic_DNA"/>
</dbReference>
<dbReference type="RefSeq" id="WP_004572826.1">
    <property type="nucleotide sequence ID" value="NC_004556.1"/>
</dbReference>
<dbReference type="SMR" id="Q87CN8"/>
<dbReference type="KEGG" id="xft:PD_1027"/>
<dbReference type="HOGENOM" id="CLU_060296_2_0_6"/>
<dbReference type="Proteomes" id="UP000002516">
    <property type="component" value="Chromosome"/>
</dbReference>
<dbReference type="GO" id="GO:0005886">
    <property type="term" value="C:plasma membrane"/>
    <property type="evidence" value="ECO:0007669"/>
    <property type="project" value="UniProtKB-SubCell"/>
</dbReference>
<dbReference type="GO" id="GO:0050380">
    <property type="term" value="F:undecaprenyl-diphosphatase activity"/>
    <property type="evidence" value="ECO:0007669"/>
    <property type="project" value="UniProtKB-UniRule"/>
</dbReference>
<dbReference type="GO" id="GO:0071555">
    <property type="term" value="P:cell wall organization"/>
    <property type="evidence" value="ECO:0007669"/>
    <property type="project" value="UniProtKB-KW"/>
</dbReference>
<dbReference type="GO" id="GO:0009252">
    <property type="term" value="P:peptidoglycan biosynthetic process"/>
    <property type="evidence" value="ECO:0007669"/>
    <property type="project" value="UniProtKB-KW"/>
</dbReference>
<dbReference type="GO" id="GO:0008360">
    <property type="term" value="P:regulation of cell shape"/>
    <property type="evidence" value="ECO:0007669"/>
    <property type="project" value="UniProtKB-KW"/>
</dbReference>
<dbReference type="GO" id="GO:0046677">
    <property type="term" value="P:response to antibiotic"/>
    <property type="evidence" value="ECO:0007669"/>
    <property type="project" value="UniProtKB-UniRule"/>
</dbReference>
<dbReference type="HAMAP" id="MF_01006">
    <property type="entry name" value="Undec_diphosphatase"/>
    <property type="match status" value="1"/>
</dbReference>
<dbReference type="InterPro" id="IPR003824">
    <property type="entry name" value="UppP"/>
</dbReference>
<dbReference type="NCBIfam" id="NF001390">
    <property type="entry name" value="PRK00281.1-4"/>
    <property type="match status" value="1"/>
</dbReference>
<dbReference type="PANTHER" id="PTHR30622">
    <property type="entry name" value="UNDECAPRENYL-DIPHOSPHATASE"/>
    <property type="match status" value="1"/>
</dbReference>
<dbReference type="PANTHER" id="PTHR30622:SF3">
    <property type="entry name" value="UNDECAPRENYL-DIPHOSPHATASE"/>
    <property type="match status" value="1"/>
</dbReference>
<dbReference type="Pfam" id="PF02673">
    <property type="entry name" value="BacA"/>
    <property type="match status" value="1"/>
</dbReference>
<proteinExistence type="inferred from homology"/>
<gene>
    <name evidence="1" type="primary">uppP</name>
    <name type="synonym">bacA</name>
    <name type="synonym">upk</name>
    <name type="ordered locus">PD_1027</name>
</gene>
<sequence>MFELFTALMLGILEGITEFLPVSSTGHLLIAEHWLGSRSDFFNIVIQAGAILAITFVFRKKVWSLATGLDKYSNRDYVMKLATAFLITAVVGLAVRKANWQLPETIQPIAWALIIGGIWILIAESVAKHLPERENVTWSVAIAVGLAQVVAGVFPGTSRSASTIFLAMLLGLSKRSAAAEFSFLVGIPTMFSASSYACFELFKRGELLHENWLEVSVAFVAAMLTGFAVVKWLLGYIKNHSFAPFAYYRIALGLVLLTWLT</sequence>
<name>UPPP_XYLFT</name>
<organism>
    <name type="scientific">Xylella fastidiosa (strain Temecula1 / ATCC 700964)</name>
    <dbReference type="NCBI Taxonomy" id="183190"/>
    <lineage>
        <taxon>Bacteria</taxon>
        <taxon>Pseudomonadati</taxon>
        <taxon>Pseudomonadota</taxon>
        <taxon>Gammaproteobacteria</taxon>
        <taxon>Lysobacterales</taxon>
        <taxon>Lysobacteraceae</taxon>
        <taxon>Xylella</taxon>
    </lineage>
</organism>
<comment type="function">
    <text evidence="1">Catalyzes the dephosphorylation of undecaprenyl diphosphate (UPP). Confers resistance to bacitracin.</text>
</comment>
<comment type="catalytic activity">
    <reaction evidence="1">
        <text>di-trans,octa-cis-undecaprenyl diphosphate + H2O = di-trans,octa-cis-undecaprenyl phosphate + phosphate + H(+)</text>
        <dbReference type="Rhea" id="RHEA:28094"/>
        <dbReference type="ChEBI" id="CHEBI:15377"/>
        <dbReference type="ChEBI" id="CHEBI:15378"/>
        <dbReference type="ChEBI" id="CHEBI:43474"/>
        <dbReference type="ChEBI" id="CHEBI:58405"/>
        <dbReference type="ChEBI" id="CHEBI:60392"/>
        <dbReference type="EC" id="3.6.1.27"/>
    </reaction>
</comment>
<comment type="subcellular location">
    <subcellularLocation>
        <location evidence="1">Cell inner membrane</location>
        <topology evidence="1">Multi-pass membrane protein</topology>
    </subcellularLocation>
</comment>
<comment type="miscellaneous">
    <text>Bacitracin is thought to be involved in the inhibition of peptidoglycan synthesis by sequestering undecaprenyl diphosphate, thereby reducing the pool of lipid carrier available.</text>
</comment>
<comment type="similarity">
    <text evidence="1">Belongs to the UppP family.</text>
</comment>
<reference key="1">
    <citation type="journal article" date="2003" name="J. Bacteriol.">
        <title>Comparative analyses of the complete genome sequences of Pierce's disease and citrus variegated chlorosis strains of Xylella fastidiosa.</title>
        <authorList>
            <person name="Van Sluys M.A."/>
            <person name="de Oliveira M.C."/>
            <person name="Monteiro-Vitorello C.B."/>
            <person name="Miyaki C.Y."/>
            <person name="Furlan L.R."/>
            <person name="Camargo L.E.A."/>
            <person name="da Silva A.C.R."/>
            <person name="Moon D.H."/>
            <person name="Takita M.A."/>
            <person name="Lemos E.G.M."/>
            <person name="Machado M.A."/>
            <person name="Ferro M.I.T."/>
            <person name="da Silva F.R."/>
            <person name="Goldman M.H.S."/>
            <person name="Goldman G.H."/>
            <person name="Lemos M.V.F."/>
            <person name="El-Dorry H."/>
            <person name="Tsai S.M."/>
            <person name="Carrer H."/>
            <person name="Carraro D.M."/>
            <person name="de Oliveira R.C."/>
            <person name="Nunes L.R."/>
            <person name="Siqueira W.J."/>
            <person name="Coutinho L.L."/>
            <person name="Kimura E.T."/>
            <person name="Ferro E.S."/>
            <person name="Harakava R."/>
            <person name="Kuramae E.E."/>
            <person name="Marino C.L."/>
            <person name="Giglioti E."/>
            <person name="Abreu I.L."/>
            <person name="Alves L.M.C."/>
            <person name="do Amaral A.M."/>
            <person name="Baia G.S."/>
            <person name="Blanco S.R."/>
            <person name="Brito M.S."/>
            <person name="Cannavan F.S."/>
            <person name="Celestino A.V."/>
            <person name="da Cunha A.F."/>
            <person name="Fenille R.C."/>
            <person name="Ferro J.A."/>
            <person name="Formighieri E.F."/>
            <person name="Kishi L.T."/>
            <person name="Leoni S.G."/>
            <person name="Oliveira A.R."/>
            <person name="Rosa V.E. Jr."/>
            <person name="Sassaki F.T."/>
            <person name="Sena J.A.D."/>
            <person name="de Souza A.A."/>
            <person name="Truffi D."/>
            <person name="Tsukumo F."/>
            <person name="Yanai G.M."/>
            <person name="Zaros L.G."/>
            <person name="Civerolo E.L."/>
            <person name="Simpson A.J.G."/>
            <person name="Almeida N.F. Jr."/>
            <person name="Setubal J.C."/>
            <person name="Kitajima J.P."/>
        </authorList>
    </citation>
    <scope>NUCLEOTIDE SEQUENCE [LARGE SCALE GENOMIC DNA]</scope>
    <source>
        <strain>Temecula1 / ATCC 700964</strain>
    </source>
</reference>
<keyword id="KW-0046">Antibiotic resistance</keyword>
<keyword id="KW-0997">Cell inner membrane</keyword>
<keyword id="KW-1003">Cell membrane</keyword>
<keyword id="KW-0133">Cell shape</keyword>
<keyword id="KW-0961">Cell wall biogenesis/degradation</keyword>
<keyword id="KW-0378">Hydrolase</keyword>
<keyword id="KW-0472">Membrane</keyword>
<keyword id="KW-0573">Peptidoglycan synthesis</keyword>
<keyword id="KW-1185">Reference proteome</keyword>
<keyword id="KW-0812">Transmembrane</keyword>
<keyword id="KW-1133">Transmembrane helix</keyword>
<accession>Q87CN8</accession>
<protein>
    <recommendedName>
        <fullName evidence="1">Undecaprenyl-diphosphatase</fullName>
        <ecNumber evidence="1">3.6.1.27</ecNumber>
    </recommendedName>
    <alternativeName>
        <fullName evidence="1">Bacitracin resistance protein</fullName>
    </alternativeName>
    <alternativeName>
        <fullName evidence="1">Undecaprenyl pyrophosphate phosphatase</fullName>
    </alternativeName>
</protein>
<evidence type="ECO:0000255" key="1">
    <source>
        <dbReference type="HAMAP-Rule" id="MF_01006"/>
    </source>
</evidence>